<comment type="function">
    <text evidence="1">Component of the cytochrome c oxidase, the last enzyme in the mitochondrial electron transport chain which drives oxidative phosphorylation. The respiratory chain contains 3 multisubunit complexes succinate dehydrogenase (complex II, CII), ubiquinol-cytochrome c oxidoreductase (cytochrome b-c1 complex, complex III, CIII) and cytochrome c oxidase (complex IV, CIV), that cooperate to transfer electrons derived from NADH and succinate to molecular oxygen, creating an electrochemical gradient over the inner membrane that drives transmembrane transport and the ATP synthase. Cytochrome c oxidase is the component of the respiratory chain that catalyzes the reduction of oxygen to water. Electrons originating from reduced cytochrome c in the intermembrane space (IMS) are transferred via the dinuclear copper A center (CU(A)) of subunit 2 and heme A of subunit 1 to the active site in subunit 1, a binuclear center (BNC) formed by heme A3 and copper B (CU(B)). The BNC reduces molecular oxygen to 2 water molecules using 4 electrons from cytochrome c in the IMS and 4 protons from the mitochondrial matrix.</text>
</comment>
<comment type="catalytic activity">
    <reaction evidence="1">
        <text>4 Fe(II)-[cytochrome c] + O2 + 8 H(+)(in) = 4 Fe(III)-[cytochrome c] + 2 H2O + 4 H(+)(out)</text>
        <dbReference type="Rhea" id="RHEA:11436"/>
        <dbReference type="Rhea" id="RHEA-COMP:10350"/>
        <dbReference type="Rhea" id="RHEA-COMP:14399"/>
        <dbReference type="ChEBI" id="CHEBI:15377"/>
        <dbReference type="ChEBI" id="CHEBI:15378"/>
        <dbReference type="ChEBI" id="CHEBI:15379"/>
        <dbReference type="ChEBI" id="CHEBI:29033"/>
        <dbReference type="ChEBI" id="CHEBI:29034"/>
        <dbReference type="EC" id="7.1.1.9"/>
    </reaction>
    <physiologicalReaction direction="left-to-right" evidence="1">
        <dbReference type="Rhea" id="RHEA:11437"/>
    </physiologicalReaction>
</comment>
<comment type="cofactor">
    <cofactor evidence="1">
        <name>Cu cation</name>
        <dbReference type="ChEBI" id="CHEBI:23378"/>
    </cofactor>
    <text evidence="1">Binds a dinuclear copper A center per subunit.</text>
</comment>
<comment type="subunit">
    <text evidence="1">Component of the cytochrome c oxidase (complex IV, CIV), a multisubunit enzyme composed of a catalytic core of 3 subunits and several supernumerary subunits. The complex exists as a monomer or a dimer and forms supercomplexes (SCs) in the inner mitochondrial membrane with ubiquinol-cytochrome c oxidoreductase (cytochrome b-c1 complex, complex III, CIII).</text>
</comment>
<comment type="subcellular location">
    <subcellularLocation>
        <location evidence="1">Mitochondrion inner membrane</location>
        <topology evidence="1">Multi-pass membrane protein</topology>
    </subcellularLocation>
</comment>
<comment type="similarity">
    <text evidence="3">Belongs to the cytochrome c oxidase subunit 2 family.</text>
</comment>
<reference key="1">
    <citation type="journal article" date="1994" name="Mol. Biol. Evol.">
        <title>Mitochondrial DNA sequence variation in the spruce budworm species complex (Choristoneura: Lepidoptera).</title>
        <authorList>
            <person name="Sperling F.A.H."/>
            <person name="Hickey D.A."/>
        </authorList>
    </citation>
    <scope>NUCLEOTIDE SEQUENCE [GENOMIC DNA]</scope>
    <source>
        <strain>37</strain>
    </source>
</reference>
<accession>P84288</accession>
<accession>P98026</accession>
<sequence length="227" mass="26434">MATWSNFNLQNSASPLMEQIIFFHDHTLVILIMITILVGYLMISLFFNSYINRFLLEGQMIELIWTILPAITLIFIALPSLRLLYLLDELNNPLITLKSIGHQWYWSYEYSDFQNIQFDSYMIPINEMKNNNFRLLDVDNRIVLPMNNQIRILVTATDVIHSWTIPSLGVKVDANPGRLNQTNFFINRPGIFYGQCSEICGANHSFMPIVIESISIKNFINWINNYS</sequence>
<geneLocation type="mitochondrion"/>
<dbReference type="EC" id="7.1.1.9"/>
<dbReference type="EMBL" id="L19098">
    <property type="protein sequence ID" value="AAA53641.1"/>
    <property type="molecule type" value="Genomic_DNA"/>
</dbReference>
<dbReference type="SMR" id="P84288"/>
<dbReference type="GO" id="GO:0005743">
    <property type="term" value="C:mitochondrial inner membrane"/>
    <property type="evidence" value="ECO:0007669"/>
    <property type="project" value="UniProtKB-SubCell"/>
</dbReference>
<dbReference type="GO" id="GO:0005507">
    <property type="term" value="F:copper ion binding"/>
    <property type="evidence" value="ECO:0007669"/>
    <property type="project" value="InterPro"/>
</dbReference>
<dbReference type="GO" id="GO:0004129">
    <property type="term" value="F:cytochrome-c oxidase activity"/>
    <property type="evidence" value="ECO:0007669"/>
    <property type="project" value="UniProtKB-EC"/>
</dbReference>
<dbReference type="GO" id="GO:0042773">
    <property type="term" value="P:ATP synthesis coupled electron transport"/>
    <property type="evidence" value="ECO:0007669"/>
    <property type="project" value="TreeGrafter"/>
</dbReference>
<dbReference type="CDD" id="cd13912">
    <property type="entry name" value="CcO_II_C"/>
    <property type="match status" value="1"/>
</dbReference>
<dbReference type="FunFam" id="1.10.287.90:FF:000006">
    <property type="entry name" value="Cytochrome c oxidase subunit 2"/>
    <property type="match status" value="1"/>
</dbReference>
<dbReference type="FunFam" id="2.60.40.420:FF:000001">
    <property type="entry name" value="Cytochrome c oxidase subunit 2"/>
    <property type="match status" value="1"/>
</dbReference>
<dbReference type="Gene3D" id="1.10.287.90">
    <property type="match status" value="1"/>
</dbReference>
<dbReference type="Gene3D" id="2.60.40.420">
    <property type="entry name" value="Cupredoxins - blue copper proteins"/>
    <property type="match status" value="1"/>
</dbReference>
<dbReference type="InterPro" id="IPR045187">
    <property type="entry name" value="CcO_II"/>
</dbReference>
<dbReference type="InterPro" id="IPR002429">
    <property type="entry name" value="CcO_II-like_C"/>
</dbReference>
<dbReference type="InterPro" id="IPR034210">
    <property type="entry name" value="CcO_II_C"/>
</dbReference>
<dbReference type="InterPro" id="IPR001505">
    <property type="entry name" value="Copper_CuA"/>
</dbReference>
<dbReference type="InterPro" id="IPR008972">
    <property type="entry name" value="Cupredoxin"/>
</dbReference>
<dbReference type="InterPro" id="IPR014222">
    <property type="entry name" value="Cyt_c_oxidase_su2"/>
</dbReference>
<dbReference type="InterPro" id="IPR011759">
    <property type="entry name" value="Cyt_c_oxidase_su2_TM_dom"/>
</dbReference>
<dbReference type="InterPro" id="IPR036257">
    <property type="entry name" value="Cyt_c_oxidase_su2_TM_sf"/>
</dbReference>
<dbReference type="NCBIfam" id="TIGR02866">
    <property type="entry name" value="CoxB"/>
    <property type="match status" value="1"/>
</dbReference>
<dbReference type="PANTHER" id="PTHR22888:SF9">
    <property type="entry name" value="CYTOCHROME C OXIDASE SUBUNIT 2"/>
    <property type="match status" value="1"/>
</dbReference>
<dbReference type="PANTHER" id="PTHR22888">
    <property type="entry name" value="CYTOCHROME C OXIDASE, SUBUNIT II"/>
    <property type="match status" value="1"/>
</dbReference>
<dbReference type="Pfam" id="PF00116">
    <property type="entry name" value="COX2"/>
    <property type="match status" value="1"/>
</dbReference>
<dbReference type="Pfam" id="PF02790">
    <property type="entry name" value="COX2_TM"/>
    <property type="match status" value="1"/>
</dbReference>
<dbReference type="PRINTS" id="PR01166">
    <property type="entry name" value="CYCOXIDASEII"/>
</dbReference>
<dbReference type="SUPFAM" id="SSF49503">
    <property type="entry name" value="Cupredoxins"/>
    <property type="match status" value="1"/>
</dbReference>
<dbReference type="SUPFAM" id="SSF81464">
    <property type="entry name" value="Cytochrome c oxidase subunit II-like, transmembrane region"/>
    <property type="match status" value="1"/>
</dbReference>
<dbReference type="PROSITE" id="PS00078">
    <property type="entry name" value="COX2"/>
    <property type="match status" value="1"/>
</dbReference>
<dbReference type="PROSITE" id="PS50857">
    <property type="entry name" value="COX2_CUA"/>
    <property type="match status" value="1"/>
</dbReference>
<dbReference type="PROSITE" id="PS50999">
    <property type="entry name" value="COX2_TM"/>
    <property type="match status" value="1"/>
</dbReference>
<feature type="chain" id="PRO_0000183550" description="Cytochrome c oxidase subunit 2">
    <location>
        <begin position="1"/>
        <end position="227"/>
    </location>
</feature>
<feature type="topological domain" description="Mitochondrial intermembrane" evidence="2">
    <location>
        <begin position="1"/>
        <end position="26"/>
    </location>
</feature>
<feature type="transmembrane region" description="Helical" evidence="2">
    <location>
        <begin position="27"/>
        <end position="51"/>
    </location>
</feature>
<feature type="topological domain" description="Mitochondrial matrix" evidence="2">
    <location>
        <begin position="52"/>
        <end position="62"/>
    </location>
</feature>
<feature type="transmembrane region" description="Helical" evidence="2">
    <location>
        <begin position="63"/>
        <end position="81"/>
    </location>
</feature>
<feature type="topological domain" description="Mitochondrial intermembrane" evidence="2">
    <location>
        <begin position="82"/>
        <end position="227"/>
    </location>
</feature>
<feature type="binding site" evidence="1">
    <location>
        <position position="161"/>
    </location>
    <ligand>
        <name>Cu cation</name>
        <dbReference type="ChEBI" id="CHEBI:23378"/>
        <label>A1</label>
    </ligand>
</feature>
<feature type="binding site" evidence="1">
    <location>
        <position position="196"/>
    </location>
    <ligand>
        <name>Cu cation</name>
        <dbReference type="ChEBI" id="CHEBI:23378"/>
        <label>A1</label>
    </ligand>
</feature>
<feature type="binding site" evidence="1">
    <location>
        <position position="196"/>
    </location>
    <ligand>
        <name>Cu cation</name>
        <dbReference type="ChEBI" id="CHEBI:23378"/>
        <label>A2</label>
    </ligand>
</feature>
<feature type="binding site" evidence="1">
    <location>
        <position position="198"/>
    </location>
    <ligand>
        <name>Cu cation</name>
        <dbReference type="ChEBI" id="CHEBI:23378"/>
        <label>A2</label>
    </ligand>
</feature>
<feature type="binding site" evidence="1">
    <location>
        <position position="198"/>
    </location>
    <ligand>
        <name>Mg(2+)</name>
        <dbReference type="ChEBI" id="CHEBI:18420"/>
        <note>ligand shared with subunit 1</note>
    </ligand>
</feature>
<feature type="binding site" evidence="1">
    <location>
        <position position="200"/>
    </location>
    <ligand>
        <name>Cu cation</name>
        <dbReference type="ChEBI" id="CHEBI:23378"/>
        <label>A1</label>
    </ligand>
</feature>
<feature type="binding site" evidence="1">
    <location>
        <position position="200"/>
    </location>
    <ligand>
        <name>Cu cation</name>
        <dbReference type="ChEBI" id="CHEBI:23378"/>
        <label>A2</label>
    </ligand>
</feature>
<feature type="binding site" evidence="1">
    <location>
        <position position="204"/>
    </location>
    <ligand>
        <name>Cu cation</name>
        <dbReference type="ChEBI" id="CHEBI:23378"/>
        <label>A2</label>
    </ligand>
</feature>
<feature type="binding site" evidence="1">
    <location>
        <position position="207"/>
    </location>
    <ligand>
        <name>Cu cation</name>
        <dbReference type="ChEBI" id="CHEBI:23378"/>
        <label>A1</label>
    </ligand>
</feature>
<organism>
    <name type="scientific">Choristoneura fumiferana</name>
    <name type="common">Spruce budworm moth</name>
    <name type="synonym">Archips fumiferana</name>
    <dbReference type="NCBI Taxonomy" id="7141"/>
    <lineage>
        <taxon>Eukaryota</taxon>
        <taxon>Metazoa</taxon>
        <taxon>Ecdysozoa</taxon>
        <taxon>Arthropoda</taxon>
        <taxon>Hexapoda</taxon>
        <taxon>Insecta</taxon>
        <taxon>Pterygota</taxon>
        <taxon>Neoptera</taxon>
        <taxon>Endopterygota</taxon>
        <taxon>Lepidoptera</taxon>
        <taxon>Glossata</taxon>
        <taxon>Ditrysia</taxon>
        <taxon>Tortricoidea</taxon>
        <taxon>Tortricidae</taxon>
        <taxon>Tortricinae</taxon>
        <taxon>Choristoneura</taxon>
    </lineage>
</organism>
<protein>
    <recommendedName>
        <fullName>Cytochrome c oxidase subunit 2</fullName>
        <ecNumber>7.1.1.9</ecNumber>
    </recommendedName>
    <alternativeName>
        <fullName>Cytochrome c oxidase polypeptide II</fullName>
    </alternativeName>
</protein>
<gene>
    <name type="primary">COII</name>
</gene>
<proteinExistence type="inferred from homology"/>
<evidence type="ECO:0000250" key="1">
    <source>
        <dbReference type="UniProtKB" id="P00410"/>
    </source>
</evidence>
<evidence type="ECO:0000255" key="2"/>
<evidence type="ECO:0000305" key="3"/>
<keyword id="KW-0186">Copper</keyword>
<keyword id="KW-0249">Electron transport</keyword>
<keyword id="KW-0460">Magnesium</keyword>
<keyword id="KW-0472">Membrane</keyword>
<keyword id="KW-0479">Metal-binding</keyword>
<keyword id="KW-0496">Mitochondrion</keyword>
<keyword id="KW-0999">Mitochondrion inner membrane</keyword>
<keyword id="KW-0679">Respiratory chain</keyword>
<keyword id="KW-1278">Translocase</keyword>
<keyword id="KW-0812">Transmembrane</keyword>
<keyword id="KW-1133">Transmembrane helix</keyword>
<keyword id="KW-0813">Transport</keyword>
<name>COX2_CHOFU</name>